<evidence type="ECO:0000250" key="1"/>
<evidence type="ECO:0000256" key="2">
    <source>
        <dbReference type="SAM" id="MobiDB-lite"/>
    </source>
</evidence>
<evidence type="ECO:0000305" key="3"/>
<keyword id="KW-0963">Cytoplasm</keyword>
<keyword id="KW-0539">Nucleus</keyword>
<keyword id="KW-0656">Proto-oncogene</keyword>
<keyword id="KW-0729">SH3-binding</keyword>
<sequence length="202" mass="21966">MATLIYVDKENEEPGTLVATKDGLKLGSGPSIKALDGRSQVSTSRFGKTFDAATALPKATRKALGTVNRATEKSVKTNGPLKQKQPSFSAKKMTEKTVKAKSSVPASDDAYPEIEKLFPFNPLGFESFNLPEEHQIAHLPLSGVPLMILDEERELEKLFQLGPPLPLKMPSPPWESNLLQSPSSILLTLDVELPPVCSDIDI</sequence>
<feature type="chain" id="PRO_0000333862" description="Putative pituitary tumor-transforming gene 3 protein">
    <location>
        <begin position="1"/>
        <end position="202"/>
    </location>
</feature>
<feature type="region of interest" description="Disordered" evidence="2">
    <location>
        <begin position="67"/>
        <end position="92"/>
    </location>
</feature>
<feature type="short sequence motif" description="D-box" evidence="1">
    <location>
        <begin position="61"/>
        <end position="64"/>
    </location>
</feature>
<feature type="short sequence motif" description="SH3-binding" evidence="1">
    <location>
        <begin position="163"/>
        <end position="173"/>
    </location>
</feature>
<reference key="1">
    <citation type="journal article" date="2005" name="PLoS Biol.">
        <title>Emergence of young human genes after a burst of retroposition in primates.</title>
        <authorList>
            <person name="Marques A.C."/>
            <person name="Dupanloup I."/>
            <person name="Vinckenbosch N."/>
            <person name="Reymond A."/>
            <person name="Kaessmann H."/>
        </authorList>
    </citation>
    <scope>NUCLEOTIDE SEQUENCE [GENOMIC DNA]</scope>
</reference>
<comment type="subcellular location">
    <subcellularLocation>
        <location evidence="1">Cytoplasm</location>
    </subcellularLocation>
    <subcellularLocation>
        <location evidence="1">Nucleus</location>
    </subcellularLocation>
</comment>
<comment type="domain">
    <text evidence="1">The N-terminal destruction box (D-box) acts as a recognition signal for degradation via the ubiquitin-proteasome pathway.</text>
</comment>
<comment type="similarity">
    <text evidence="3">Belongs to the securin family.</text>
</comment>
<organism>
    <name type="scientific">Pongo pygmaeus</name>
    <name type="common">Bornean orangutan</name>
    <dbReference type="NCBI Taxonomy" id="9600"/>
    <lineage>
        <taxon>Eukaryota</taxon>
        <taxon>Metazoa</taxon>
        <taxon>Chordata</taxon>
        <taxon>Craniata</taxon>
        <taxon>Vertebrata</taxon>
        <taxon>Euteleostomi</taxon>
        <taxon>Mammalia</taxon>
        <taxon>Eutheria</taxon>
        <taxon>Euarchontoglires</taxon>
        <taxon>Primates</taxon>
        <taxon>Haplorrhini</taxon>
        <taxon>Catarrhini</taxon>
        <taxon>Hominidae</taxon>
        <taxon>Pongo</taxon>
    </lineage>
</organism>
<dbReference type="EMBL" id="DQ120703">
    <property type="protein sequence ID" value="ABC40665.1"/>
    <property type="molecule type" value="Genomic_DNA"/>
</dbReference>
<dbReference type="GO" id="GO:0005737">
    <property type="term" value="C:cytoplasm"/>
    <property type="evidence" value="ECO:0007669"/>
    <property type="project" value="UniProtKB-SubCell"/>
</dbReference>
<dbReference type="GO" id="GO:0005634">
    <property type="term" value="C:nucleus"/>
    <property type="evidence" value="ECO:0007669"/>
    <property type="project" value="UniProtKB-SubCell"/>
</dbReference>
<dbReference type="GO" id="GO:0017124">
    <property type="term" value="F:SH3 domain binding"/>
    <property type="evidence" value="ECO:0007669"/>
    <property type="project" value="UniProtKB-KW"/>
</dbReference>
<dbReference type="GO" id="GO:0051276">
    <property type="term" value="P:chromosome organization"/>
    <property type="evidence" value="ECO:0007669"/>
    <property type="project" value="InterPro"/>
</dbReference>
<dbReference type="GO" id="GO:0045143">
    <property type="term" value="P:homologous chromosome segregation"/>
    <property type="evidence" value="ECO:0007669"/>
    <property type="project" value="TreeGrafter"/>
</dbReference>
<dbReference type="InterPro" id="IPR006940">
    <property type="entry name" value="Securin_separation_inhibitor"/>
</dbReference>
<dbReference type="PANTHER" id="PTHR10418:SF3">
    <property type="entry name" value="PITUITARY TUMOR-TRANSFORMING GENE 3 PROTEIN-RELATED"/>
    <property type="match status" value="1"/>
</dbReference>
<dbReference type="PANTHER" id="PTHR10418">
    <property type="entry name" value="SECURIN-3"/>
    <property type="match status" value="1"/>
</dbReference>
<dbReference type="Pfam" id="PF04856">
    <property type="entry name" value="Securin"/>
    <property type="match status" value="1"/>
</dbReference>
<proteinExistence type="inferred from homology"/>
<name>PTTG3_PONPY</name>
<accession>Q2QD14</accession>
<gene>
    <name type="primary">PTTG3</name>
</gene>
<protein>
    <recommendedName>
        <fullName>Putative pituitary tumor-transforming gene 3 protein</fullName>
    </recommendedName>
    <alternativeName>
        <fullName>Securin-3</fullName>
    </alternativeName>
    <alternativeName>
        <fullName>rcPTTG1</fullName>
    </alternativeName>
</protein>